<accession>G3ESU9</accession>
<name>FATB1_CUPVI</name>
<evidence type="ECO:0000250" key="1">
    <source>
        <dbReference type="UniProtKB" id="Q41635"/>
    </source>
</evidence>
<evidence type="ECO:0000255" key="2"/>
<evidence type="ECO:0000256" key="3">
    <source>
        <dbReference type="SAM" id="MobiDB-lite"/>
    </source>
</evidence>
<evidence type="ECO:0000269" key="4">
    <source>
    </source>
</evidence>
<evidence type="ECO:0000269" key="5">
    <source>
    </source>
</evidence>
<evidence type="ECO:0000269" key="6">
    <source>
    </source>
</evidence>
<evidence type="ECO:0000303" key="7">
    <source>
    </source>
</evidence>
<evidence type="ECO:0000305" key="8"/>
<evidence type="ECO:0000305" key="9">
    <source>
    </source>
</evidence>
<dbReference type="EC" id="3.1.2.-" evidence="4 5 6"/>
<dbReference type="EMBL" id="JF338906">
    <property type="protein sequence ID" value="AEM72522.1"/>
    <property type="molecule type" value="mRNA"/>
</dbReference>
<dbReference type="SMR" id="G3ESU9"/>
<dbReference type="BRENDA" id="3.1.2.14">
    <property type="organism ID" value="16463"/>
</dbReference>
<dbReference type="GO" id="GO:0009507">
    <property type="term" value="C:chloroplast"/>
    <property type="evidence" value="ECO:0007669"/>
    <property type="project" value="UniProtKB-SubCell"/>
</dbReference>
<dbReference type="GO" id="GO:0000036">
    <property type="term" value="F:acyl carrier activity"/>
    <property type="evidence" value="ECO:0007669"/>
    <property type="project" value="TreeGrafter"/>
</dbReference>
<dbReference type="GO" id="GO:0016297">
    <property type="term" value="F:fatty acyl-[ACP] hydrolase activity"/>
    <property type="evidence" value="ECO:0007669"/>
    <property type="project" value="InterPro"/>
</dbReference>
<dbReference type="CDD" id="cd00586">
    <property type="entry name" value="4HBT"/>
    <property type="match status" value="1"/>
</dbReference>
<dbReference type="FunFam" id="3.10.129.10:FF:000014">
    <property type="entry name" value="Acyl-[acyl-carrier-protein] hydrolase"/>
    <property type="match status" value="1"/>
</dbReference>
<dbReference type="Gene3D" id="3.10.129.10">
    <property type="entry name" value="Hotdog Thioesterase"/>
    <property type="match status" value="1"/>
</dbReference>
<dbReference type="InterPro" id="IPR021113">
    <property type="entry name" value="Acyl-ACP-thioesterase_N"/>
</dbReference>
<dbReference type="InterPro" id="IPR049427">
    <property type="entry name" value="Acyl-ACP_TE_C"/>
</dbReference>
<dbReference type="InterPro" id="IPR002864">
    <property type="entry name" value="Acyl-ACP_thioesterase_NHD"/>
</dbReference>
<dbReference type="InterPro" id="IPR045023">
    <property type="entry name" value="FATA/B"/>
</dbReference>
<dbReference type="InterPro" id="IPR029069">
    <property type="entry name" value="HotDog_dom_sf"/>
</dbReference>
<dbReference type="PANTHER" id="PTHR31727">
    <property type="entry name" value="OLEOYL-ACYL CARRIER PROTEIN THIOESTERASE 1, CHLOROPLASTIC"/>
    <property type="match status" value="1"/>
</dbReference>
<dbReference type="PANTHER" id="PTHR31727:SF2">
    <property type="entry name" value="PALMITOYL-ACYL CARRIER PROTEIN THIOESTERASE, CHLOROPLASTIC"/>
    <property type="match status" value="1"/>
</dbReference>
<dbReference type="Pfam" id="PF01643">
    <property type="entry name" value="Acyl-ACP_TE"/>
    <property type="match status" value="1"/>
</dbReference>
<dbReference type="Pfam" id="PF20791">
    <property type="entry name" value="Acyl-ACP_TE_C"/>
    <property type="match status" value="1"/>
</dbReference>
<dbReference type="Pfam" id="PF12590">
    <property type="entry name" value="Acyl-thio_N"/>
    <property type="match status" value="1"/>
</dbReference>
<dbReference type="SUPFAM" id="SSF54637">
    <property type="entry name" value="Thioesterase/thiol ester dehydrase-isomerase"/>
    <property type="match status" value="2"/>
</dbReference>
<feature type="transit peptide" description="Chloroplast" evidence="2">
    <location>
        <begin position="1"/>
        <end position="50"/>
    </location>
</feature>
<feature type="chain" id="PRO_0000450101" description="Acyl-[acyl-carrier-protein] hydrolase FATB1, chloroplastic" evidence="2">
    <location>
        <begin position="51"/>
        <end position="419"/>
    </location>
</feature>
<feature type="region of interest" description="Disordered" evidence="3">
    <location>
        <begin position="1"/>
        <end position="84"/>
    </location>
</feature>
<feature type="region of interest" description="Disordered" evidence="3">
    <location>
        <begin position="390"/>
        <end position="419"/>
    </location>
</feature>
<feature type="compositionally biased region" description="Polar residues" evidence="3">
    <location>
        <begin position="61"/>
        <end position="78"/>
    </location>
</feature>
<feature type="compositionally biased region" description="Polar residues" evidence="3">
    <location>
        <begin position="399"/>
        <end position="419"/>
    </location>
</feature>
<feature type="active site" evidence="1">
    <location>
        <position position="315"/>
    </location>
</feature>
<feature type="active site" evidence="1">
    <location>
        <position position="317"/>
    </location>
</feature>
<feature type="active site" evidence="2">
    <location>
        <position position="352"/>
    </location>
</feature>
<feature type="mutagenesis site" description="Reduces thioesterase activity 7-fold." evidence="6">
    <original>N</original>
    <variation>A</variation>
    <location>
        <position position="315"/>
    </location>
</feature>
<feature type="mutagenesis site" description="Loss of thioesterase activity." evidence="6">
    <original>H</original>
    <variation>A</variation>
    <location>
        <position position="317"/>
    </location>
</feature>
<feature type="mutagenesis site" description="Reduces thioesterase activity 18-fold." evidence="6">
    <original>E</original>
    <variation>A</variation>
    <location>
        <position position="351"/>
    </location>
</feature>
<feature type="mutagenesis site" description="Reduces thioesterase activity 9-fold." evidence="6">
    <original>E</original>
    <variation>D</variation>
    <location>
        <position position="351"/>
    </location>
</feature>
<feature type="mutagenesis site" description="Reduces thioesterase activity 1.5-fold." evidence="6">
    <original>C</original>
    <variation>A</variation>
    <variation>S</variation>
    <location>
        <position position="352"/>
    </location>
</feature>
<reference key="1">
    <citation type="journal article" date="2011" name="BMC Biochem.">
        <title>Phylogenetic and experimental characterization of an acyl-ACP thioesterase family reveals significant diversity in enzymatic specificity and activity.</title>
        <authorList>
            <person name="Jing F."/>
            <person name="Cantu D.C."/>
            <person name="Tvaruzkova J."/>
            <person name="Chipman J.P."/>
            <person name="Nikolau B.J."/>
            <person name="Yandeau-Nelson M.D."/>
            <person name="Reilly P.J."/>
        </authorList>
    </citation>
    <scope>NUCLEOTIDE SEQUENCE [MRNA]</scope>
    <scope>FUNCTION</scope>
    <scope>CATALYTIC ACTIVITY</scope>
</reference>
<reference key="2">
    <citation type="journal article" date="2018" name="Nat. Commun.">
        <title>Two distinct domains contribute to the substrate acyl chain length selectivity of plant acyl-ACP thioesterase.</title>
        <authorList>
            <person name="Jing F."/>
            <person name="Zhao L."/>
            <person name="Yandeau-Nelson M.D."/>
            <person name="Nikolau B.J."/>
        </authorList>
    </citation>
    <scope>FUNCTION</scope>
    <scope>CATALYTIC ACTIVITY</scope>
</reference>
<reference key="3">
    <citation type="journal article" date="2018" name="Biochem. J.">
        <title>Identification of active site residues implies a two-step catalytic mechanism for acyl-ACP thioesterase.</title>
        <authorList>
            <person name="Jing F."/>
            <person name="Yandeau-Nelson M.D."/>
            <person name="Nikolau B.J."/>
        </authorList>
    </citation>
    <scope>FUNCTION</scope>
    <scope>CATALYTIC ACTIVITY</scope>
    <scope>MUTAGENESIS OF ASN-315; HIS-317; GLU-351 AND CYS-352</scope>
</reference>
<comment type="function">
    <text evidence="4 5 6 9">Plays an essential role in chain termination during de novo fatty acid synthesis (Probable). Possesses thioesterase activity for short chain acyl-ACPs. Substrate preference is 8:0 &gt; 10:0 (PubMed:21831316, PubMed:29491418, PubMed:30409825).</text>
</comment>
<comment type="catalytic activity">
    <reaction evidence="4 5 6">
        <text>octanoyl-[ACP] + H2O = octanoate + holo-[ACP] + H(+)</text>
        <dbReference type="Rhea" id="RHEA:30131"/>
        <dbReference type="Rhea" id="RHEA-COMP:9636"/>
        <dbReference type="Rhea" id="RHEA-COMP:9685"/>
        <dbReference type="ChEBI" id="CHEBI:15377"/>
        <dbReference type="ChEBI" id="CHEBI:15378"/>
        <dbReference type="ChEBI" id="CHEBI:25646"/>
        <dbReference type="ChEBI" id="CHEBI:64479"/>
        <dbReference type="ChEBI" id="CHEBI:78463"/>
    </reaction>
    <physiologicalReaction direction="left-to-right" evidence="4 5 6">
        <dbReference type="Rhea" id="RHEA:30132"/>
    </physiologicalReaction>
</comment>
<comment type="catalytic activity">
    <reaction evidence="4 5 6">
        <text>decanoyl-[ACP] + H2O = decanoate + holo-[ACP] + H(+)</text>
        <dbReference type="Rhea" id="RHEA:30115"/>
        <dbReference type="Rhea" id="RHEA-COMP:9640"/>
        <dbReference type="Rhea" id="RHEA-COMP:9685"/>
        <dbReference type="ChEBI" id="CHEBI:15377"/>
        <dbReference type="ChEBI" id="CHEBI:15378"/>
        <dbReference type="ChEBI" id="CHEBI:27689"/>
        <dbReference type="ChEBI" id="CHEBI:64479"/>
        <dbReference type="ChEBI" id="CHEBI:78468"/>
    </reaction>
    <physiologicalReaction direction="left-to-right" evidence="4 5 6">
        <dbReference type="Rhea" id="RHEA:30116"/>
    </physiologicalReaction>
</comment>
<comment type="subcellular location">
    <subcellularLocation>
        <location evidence="2">Plastid</location>
        <location evidence="2">Chloroplast</location>
    </subcellularLocation>
</comment>
<comment type="similarity">
    <text evidence="8">Belongs to the acyl-ACP thioesterase family.</text>
</comment>
<keyword id="KW-0150">Chloroplast</keyword>
<keyword id="KW-0275">Fatty acid biosynthesis</keyword>
<keyword id="KW-0276">Fatty acid metabolism</keyword>
<keyword id="KW-0378">Hydrolase</keyword>
<keyword id="KW-0444">Lipid biosynthesis</keyword>
<keyword id="KW-0443">Lipid metabolism</keyword>
<keyword id="KW-0934">Plastid</keyword>
<keyword id="KW-0809">Transit peptide</keyword>
<gene>
    <name evidence="7" type="primary">FATB1</name>
</gene>
<sequence>MVAAAATSAFFPVPAPGTSPKPGKSGNWPSSLSPTFKPKSIPNGGFQVKANASAHPKANGSAVNLKSGSLNTQEDTSSSPPPRAFLNQLPDWSMLLTAITTVFVAAEKQWTMLDRKSKRPDMLVDSVGLKSIVRDGLVSRHSFSIRSYEIGADRTASIETLMNHLQETTINHCKSLGLHNDGFGRTPGMCKNDLIWVLTKMQIMVNRYPTWGDTVEINTWFSQSGKIGMASDWLISDCNTGEILIRATSVWAMMNQKTRRFSRLPYEVRQELTPHFVDSPHVIEDNDQKLRKFDVKTGDSIRKGLTPRWNDLDVNQHVSNVKYIGWILESMPIEVLETQELCSLTVEYRRECGMDSVLESVTAVDPSENGGRSQYKHLLRLEDGTDIVKSRTEWRPKNAGTNGAISTSTAKTSNGNSVS</sequence>
<proteinExistence type="evidence at protein level"/>
<protein>
    <recommendedName>
        <fullName evidence="8">Acyl-[acyl-carrier-protein] hydrolase FATB1, chloroplastic</fullName>
        <shortName evidence="7">CvFatB1</shortName>
        <ecNumber evidence="4 5 6">3.1.2.-</ecNumber>
    </recommendedName>
    <alternativeName>
        <fullName evidence="9">Decanoyl-[acyl-carrier-protein] thioesterase</fullName>
    </alternativeName>
    <alternativeName>
        <fullName evidence="9">Octanoyl-[acyl-carrier-protein] thioesterase</fullName>
    </alternativeName>
</protein>
<organism>
    <name type="scientific">Cuphea viscosissima</name>
    <name type="common">Blue waxweed</name>
    <dbReference type="NCBI Taxonomy" id="857185"/>
    <lineage>
        <taxon>Eukaryota</taxon>
        <taxon>Viridiplantae</taxon>
        <taxon>Streptophyta</taxon>
        <taxon>Embryophyta</taxon>
        <taxon>Tracheophyta</taxon>
        <taxon>Spermatophyta</taxon>
        <taxon>Magnoliopsida</taxon>
        <taxon>eudicotyledons</taxon>
        <taxon>Gunneridae</taxon>
        <taxon>Pentapetalae</taxon>
        <taxon>rosids</taxon>
        <taxon>malvids</taxon>
        <taxon>Myrtales</taxon>
        <taxon>Lythraceae</taxon>
        <taxon>Cuphea</taxon>
    </lineage>
</organism>